<feature type="chain" id="PRO_1000081704" description="Putative 3-methyladenine DNA glycosylase">
    <location>
        <begin position="1"/>
        <end position="202"/>
    </location>
</feature>
<name>3MGH_STAA2</name>
<organism>
    <name type="scientific">Staphylococcus aureus (strain JH1)</name>
    <dbReference type="NCBI Taxonomy" id="359787"/>
    <lineage>
        <taxon>Bacteria</taxon>
        <taxon>Bacillati</taxon>
        <taxon>Bacillota</taxon>
        <taxon>Bacilli</taxon>
        <taxon>Bacillales</taxon>
        <taxon>Staphylococcaceae</taxon>
        <taxon>Staphylococcus</taxon>
    </lineage>
</organism>
<evidence type="ECO:0000255" key="1">
    <source>
        <dbReference type="HAMAP-Rule" id="MF_00527"/>
    </source>
</evidence>
<gene>
    <name type="ordered locus">SaurJH1_2414</name>
</gene>
<reference key="1">
    <citation type="submission" date="2007-06" db="EMBL/GenBank/DDBJ databases">
        <title>Complete sequence of chromosome of Staphylococcus aureus subsp. aureus JH1.</title>
        <authorList>
            <consortium name="US DOE Joint Genome Institute"/>
            <person name="Copeland A."/>
            <person name="Lucas S."/>
            <person name="Lapidus A."/>
            <person name="Barry K."/>
            <person name="Detter J.C."/>
            <person name="Glavina del Rio T."/>
            <person name="Hammon N."/>
            <person name="Israni S."/>
            <person name="Dalin E."/>
            <person name="Tice H."/>
            <person name="Pitluck S."/>
            <person name="Chain P."/>
            <person name="Malfatti S."/>
            <person name="Shin M."/>
            <person name="Vergez L."/>
            <person name="Schmutz J."/>
            <person name="Larimer F."/>
            <person name="Land M."/>
            <person name="Hauser L."/>
            <person name="Kyrpides N."/>
            <person name="Ivanova N."/>
            <person name="Tomasz A."/>
            <person name="Richardson P."/>
        </authorList>
    </citation>
    <scope>NUCLEOTIDE SEQUENCE [LARGE SCALE GENOMIC DNA]</scope>
    <source>
        <strain>JH1</strain>
    </source>
</reference>
<accession>A6U471</accession>
<sequence>MDFVNNDTRQIAKNLLGVKVIYQDTTQTYTGYIVETEAYLGLNDRAAHGYGGKITPKVTSLYKRGGTIYAHVMHTHLLINFVTKSEGIPEGVLIRAIEPEEGLSAMFRNRGKKGYEVTNGPGKWTKAFNIPRAIDGATLNDCRLSIDTKNRKYPKDIIASPRIGIPNKGDWTHKSLRYTVKGNPFVSRMRKSDCMFPEDTWK</sequence>
<dbReference type="EC" id="3.2.2.-" evidence="1"/>
<dbReference type="EMBL" id="CP000736">
    <property type="protein sequence ID" value="ABR53239.1"/>
    <property type="molecule type" value="Genomic_DNA"/>
</dbReference>
<dbReference type="SMR" id="A6U471"/>
<dbReference type="KEGG" id="sah:SaurJH1_2414"/>
<dbReference type="HOGENOM" id="CLU_060471_2_0_9"/>
<dbReference type="GO" id="GO:0003905">
    <property type="term" value="F:alkylbase DNA N-glycosylase activity"/>
    <property type="evidence" value="ECO:0007669"/>
    <property type="project" value="InterPro"/>
</dbReference>
<dbReference type="GO" id="GO:0003677">
    <property type="term" value="F:DNA binding"/>
    <property type="evidence" value="ECO:0007669"/>
    <property type="project" value="InterPro"/>
</dbReference>
<dbReference type="GO" id="GO:0006284">
    <property type="term" value="P:base-excision repair"/>
    <property type="evidence" value="ECO:0007669"/>
    <property type="project" value="InterPro"/>
</dbReference>
<dbReference type="CDD" id="cd00540">
    <property type="entry name" value="AAG"/>
    <property type="match status" value="1"/>
</dbReference>
<dbReference type="FunFam" id="3.10.300.10:FF:000001">
    <property type="entry name" value="Putative 3-methyladenine DNA glycosylase"/>
    <property type="match status" value="1"/>
</dbReference>
<dbReference type="Gene3D" id="3.10.300.10">
    <property type="entry name" value="Methylpurine-DNA glycosylase (MPG)"/>
    <property type="match status" value="1"/>
</dbReference>
<dbReference type="HAMAP" id="MF_00527">
    <property type="entry name" value="3MGH"/>
    <property type="match status" value="1"/>
</dbReference>
<dbReference type="InterPro" id="IPR011034">
    <property type="entry name" value="Formyl_transferase-like_C_sf"/>
</dbReference>
<dbReference type="InterPro" id="IPR003180">
    <property type="entry name" value="MPG"/>
</dbReference>
<dbReference type="InterPro" id="IPR036995">
    <property type="entry name" value="MPG_sf"/>
</dbReference>
<dbReference type="NCBIfam" id="TIGR00567">
    <property type="entry name" value="3mg"/>
    <property type="match status" value="1"/>
</dbReference>
<dbReference type="PANTHER" id="PTHR10429">
    <property type="entry name" value="DNA-3-METHYLADENINE GLYCOSYLASE"/>
    <property type="match status" value="1"/>
</dbReference>
<dbReference type="PANTHER" id="PTHR10429:SF0">
    <property type="entry name" value="DNA-3-METHYLADENINE GLYCOSYLASE"/>
    <property type="match status" value="1"/>
</dbReference>
<dbReference type="Pfam" id="PF02245">
    <property type="entry name" value="Pur_DNA_glyco"/>
    <property type="match status" value="1"/>
</dbReference>
<dbReference type="SUPFAM" id="SSF50486">
    <property type="entry name" value="FMT C-terminal domain-like"/>
    <property type="match status" value="1"/>
</dbReference>
<keyword id="KW-0227">DNA damage</keyword>
<keyword id="KW-0234">DNA repair</keyword>
<keyword id="KW-0378">Hydrolase</keyword>
<comment type="similarity">
    <text evidence="1">Belongs to the DNA glycosylase MPG family.</text>
</comment>
<protein>
    <recommendedName>
        <fullName evidence="1">Putative 3-methyladenine DNA glycosylase</fullName>
        <ecNumber evidence="1">3.2.2.-</ecNumber>
    </recommendedName>
</protein>
<proteinExistence type="inferred from homology"/>